<keyword id="KW-0028">Amino-acid biosynthesis</keyword>
<keyword id="KW-0057">Aromatic amino acid biosynthesis</keyword>
<keyword id="KW-0521">NADP</keyword>
<keyword id="KW-0560">Oxidoreductase</keyword>
<gene>
    <name evidence="1" type="primary">aroE</name>
    <name type="ordered locus">SBO_3275</name>
</gene>
<reference key="1">
    <citation type="journal article" date="2005" name="Nucleic Acids Res.">
        <title>Genome dynamics and diversity of Shigella species, the etiologic agents of bacillary dysentery.</title>
        <authorList>
            <person name="Yang F."/>
            <person name="Yang J."/>
            <person name="Zhang X."/>
            <person name="Chen L."/>
            <person name="Jiang Y."/>
            <person name="Yan Y."/>
            <person name="Tang X."/>
            <person name="Wang J."/>
            <person name="Xiong Z."/>
            <person name="Dong J."/>
            <person name="Xue Y."/>
            <person name="Zhu Y."/>
            <person name="Xu X."/>
            <person name="Sun L."/>
            <person name="Chen S."/>
            <person name="Nie H."/>
            <person name="Peng J."/>
            <person name="Xu J."/>
            <person name="Wang Y."/>
            <person name="Yuan Z."/>
            <person name="Wen Y."/>
            <person name="Yao Z."/>
            <person name="Shen Y."/>
            <person name="Qiang B."/>
            <person name="Hou Y."/>
            <person name="Yu J."/>
            <person name="Jin Q."/>
        </authorList>
    </citation>
    <scope>NUCLEOTIDE SEQUENCE [LARGE SCALE GENOMIC DNA]</scope>
    <source>
        <strain>Sb227</strain>
    </source>
</reference>
<accession>Q31VZ5</accession>
<dbReference type="EC" id="1.1.1.25" evidence="1"/>
<dbReference type="EMBL" id="CP000036">
    <property type="protein sequence ID" value="ABB67763.1"/>
    <property type="molecule type" value="Genomic_DNA"/>
</dbReference>
<dbReference type="RefSeq" id="WP_000451236.1">
    <property type="nucleotide sequence ID" value="NC_007613.1"/>
</dbReference>
<dbReference type="SMR" id="Q31VZ5"/>
<dbReference type="KEGG" id="sbo:SBO_3275"/>
<dbReference type="HOGENOM" id="CLU_044063_2_1_6"/>
<dbReference type="UniPathway" id="UPA00053">
    <property type="reaction ID" value="UER00087"/>
</dbReference>
<dbReference type="Proteomes" id="UP000007067">
    <property type="component" value="Chromosome"/>
</dbReference>
<dbReference type="GO" id="GO:0005829">
    <property type="term" value="C:cytosol"/>
    <property type="evidence" value="ECO:0007669"/>
    <property type="project" value="TreeGrafter"/>
</dbReference>
<dbReference type="GO" id="GO:0050661">
    <property type="term" value="F:NADP binding"/>
    <property type="evidence" value="ECO:0007669"/>
    <property type="project" value="InterPro"/>
</dbReference>
<dbReference type="GO" id="GO:0004764">
    <property type="term" value="F:shikimate 3-dehydrogenase (NADP+) activity"/>
    <property type="evidence" value="ECO:0007669"/>
    <property type="project" value="UniProtKB-UniRule"/>
</dbReference>
<dbReference type="GO" id="GO:0008652">
    <property type="term" value="P:amino acid biosynthetic process"/>
    <property type="evidence" value="ECO:0007669"/>
    <property type="project" value="UniProtKB-KW"/>
</dbReference>
<dbReference type="GO" id="GO:0009073">
    <property type="term" value="P:aromatic amino acid family biosynthetic process"/>
    <property type="evidence" value="ECO:0007669"/>
    <property type="project" value="UniProtKB-KW"/>
</dbReference>
<dbReference type="GO" id="GO:0009423">
    <property type="term" value="P:chorismate biosynthetic process"/>
    <property type="evidence" value="ECO:0007669"/>
    <property type="project" value="UniProtKB-UniRule"/>
</dbReference>
<dbReference type="GO" id="GO:0019632">
    <property type="term" value="P:shikimate metabolic process"/>
    <property type="evidence" value="ECO:0007669"/>
    <property type="project" value="InterPro"/>
</dbReference>
<dbReference type="CDD" id="cd01065">
    <property type="entry name" value="NAD_bind_Shikimate_DH"/>
    <property type="match status" value="1"/>
</dbReference>
<dbReference type="FunFam" id="3.40.50.10860:FF:000006">
    <property type="entry name" value="Shikimate dehydrogenase (NADP(+))"/>
    <property type="match status" value="1"/>
</dbReference>
<dbReference type="FunFam" id="3.40.50.720:FF:000104">
    <property type="entry name" value="Shikimate dehydrogenase (NADP(+))"/>
    <property type="match status" value="1"/>
</dbReference>
<dbReference type="Gene3D" id="3.40.50.10860">
    <property type="entry name" value="Leucine Dehydrogenase, chain A, domain 1"/>
    <property type="match status" value="1"/>
</dbReference>
<dbReference type="Gene3D" id="3.40.50.720">
    <property type="entry name" value="NAD(P)-binding Rossmann-like Domain"/>
    <property type="match status" value="1"/>
</dbReference>
<dbReference type="HAMAP" id="MF_00222">
    <property type="entry name" value="Shikimate_DH_AroE"/>
    <property type="match status" value="1"/>
</dbReference>
<dbReference type="InterPro" id="IPR046346">
    <property type="entry name" value="Aminoacid_DH-like_N_sf"/>
</dbReference>
<dbReference type="InterPro" id="IPR036291">
    <property type="entry name" value="NAD(P)-bd_dom_sf"/>
</dbReference>
<dbReference type="InterPro" id="IPR041121">
    <property type="entry name" value="SDH_C"/>
</dbReference>
<dbReference type="InterPro" id="IPR011342">
    <property type="entry name" value="Shikimate_DH"/>
</dbReference>
<dbReference type="InterPro" id="IPR013708">
    <property type="entry name" value="Shikimate_DH-bd_N"/>
</dbReference>
<dbReference type="InterPro" id="IPR022893">
    <property type="entry name" value="Shikimate_DH_fam"/>
</dbReference>
<dbReference type="InterPro" id="IPR006151">
    <property type="entry name" value="Shikm_DH/Glu-tRNA_Rdtase"/>
</dbReference>
<dbReference type="NCBIfam" id="TIGR00507">
    <property type="entry name" value="aroE"/>
    <property type="match status" value="1"/>
</dbReference>
<dbReference type="NCBIfam" id="NF001310">
    <property type="entry name" value="PRK00258.1-2"/>
    <property type="match status" value="1"/>
</dbReference>
<dbReference type="PANTHER" id="PTHR21089:SF1">
    <property type="entry name" value="BIFUNCTIONAL 3-DEHYDROQUINATE DEHYDRATASE_SHIKIMATE DEHYDROGENASE, CHLOROPLASTIC"/>
    <property type="match status" value="1"/>
</dbReference>
<dbReference type="PANTHER" id="PTHR21089">
    <property type="entry name" value="SHIKIMATE DEHYDROGENASE"/>
    <property type="match status" value="1"/>
</dbReference>
<dbReference type="Pfam" id="PF18317">
    <property type="entry name" value="SDH_C"/>
    <property type="match status" value="1"/>
</dbReference>
<dbReference type="Pfam" id="PF01488">
    <property type="entry name" value="Shikimate_DH"/>
    <property type="match status" value="1"/>
</dbReference>
<dbReference type="Pfam" id="PF08501">
    <property type="entry name" value="Shikimate_dh_N"/>
    <property type="match status" value="1"/>
</dbReference>
<dbReference type="SUPFAM" id="SSF53223">
    <property type="entry name" value="Aminoacid dehydrogenase-like, N-terminal domain"/>
    <property type="match status" value="1"/>
</dbReference>
<dbReference type="SUPFAM" id="SSF51735">
    <property type="entry name" value="NAD(P)-binding Rossmann-fold domains"/>
    <property type="match status" value="1"/>
</dbReference>
<sequence>METYAVFGNPIAHSKSPFIHQQFAQQLNIEHPYGRVLAPINDFINTLNAFFSAGGKGANVTVPFKEEAFARADELTERAALAGAVNTLKRLEDGRLQGDNTDGIGLLSDLERLSFIRPGLRILLIGAGGASRGVLLPLLSLDCAVTITNRTVSRAEELAKLFAHTGSIQALGMDELEGHEFDLIINATSSGISGDIPAIPSSLIHLGIYCYDMFYQKGKTPFLAWCEQRGSKRNADGLGMLVAQAAHAFLLWHGVLPDVEPVIKQLQEELSA</sequence>
<protein>
    <recommendedName>
        <fullName evidence="1">Shikimate dehydrogenase (NADP(+))</fullName>
        <shortName evidence="1">SDH</shortName>
        <ecNumber evidence="1">1.1.1.25</ecNumber>
    </recommendedName>
</protein>
<proteinExistence type="inferred from homology"/>
<comment type="function">
    <text evidence="1">Involved in the biosynthesis of the chorismate, which leads to the biosynthesis of aromatic amino acids. Catalyzes the reversible NADPH linked reduction of 3-dehydroshikimate (DHSA) to yield shikimate (SA).</text>
</comment>
<comment type="catalytic activity">
    <reaction evidence="1">
        <text>shikimate + NADP(+) = 3-dehydroshikimate + NADPH + H(+)</text>
        <dbReference type="Rhea" id="RHEA:17737"/>
        <dbReference type="ChEBI" id="CHEBI:15378"/>
        <dbReference type="ChEBI" id="CHEBI:16630"/>
        <dbReference type="ChEBI" id="CHEBI:36208"/>
        <dbReference type="ChEBI" id="CHEBI:57783"/>
        <dbReference type="ChEBI" id="CHEBI:58349"/>
        <dbReference type="EC" id="1.1.1.25"/>
    </reaction>
</comment>
<comment type="pathway">
    <text evidence="1">Metabolic intermediate biosynthesis; chorismate biosynthesis; chorismate from D-erythrose 4-phosphate and phosphoenolpyruvate: step 4/7.</text>
</comment>
<comment type="subunit">
    <text evidence="1">Homodimer.</text>
</comment>
<comment type="similarity">
    <text evidence="1">Belongs to the shikimate dehydrogenase family.</text>
</comment>
<evidence type="ECO:0000255" key="1">
    <source>
        <dbReference type="HAMAP-Rule" id="MF_00222"/>
    </source>
</evidence>
<feature type="chain" id="PRO_1000021331" description="Shikimate dehydrogenase (NADP(+))">
    <location>
        <begin position="1"/>
        <end position="272"/>
    </location>
</feature>
<feature type="active site" description="Proton acceptor" evidence="1">
    <location>
        <position position="65"/>
    </location>
</feature>
<feature type="binding site" evidence="1">
    <location>
        <begin position="14"/>
        <end position="16"/>
    </location>
    <ligand>
        <name>shikimate</name>
        <dbReference type="ChEBI" id="CHEBI:36208"/>
    </ligand>
</feature>
<feature type="binding site" evidence="1">
    <location>
        <position position="61"/>
    </location>
    <ligand>
        <name>shikimate</name>
        <dbReference type="ChEBI" id="CHEBI:36208"/>
    </ligand>
</feature>
<feature type="binding site" evidence="1">
    <location>
        <position position="77"/>
    </location>
    <ligand>
        <name>NADP(+)</name>
        <dbReference type="ChEBI" id="CHEBI:58349"/>
    </ligand>
</feature>
<feature type="binding site" evidence="1">
    <location>
        <position position="86"/>
    </location>
    <ligand>
        <name>shikimate</name>
        <dbReference type="ChEBI" id="CHEBI:36208"/>
    </ligand>
</feature>
<feature type="binding site" evidence="1">
    <location>
        <position position="102"/>
    </location>
    <ligand>
        <name>shikimate</name>
        <dbReference type="ChEBI" id="CHEBI:36208"/>
    </ligand>
</feature>
<feature type="binding site" evidence="1">
    <location>
        <begin position="126"/>
        <end position="130"/>
    </location>
    <ligand>
        <name>NADP(+)</name>
        <dbReference type="ChEBI" id="CHEBI:58349"/>
    </ligand>
</feature>
<feature type="binding site" evidence="1">
    <location>
        <begin position="149"/>
        <end position="154"/>
    </location>
    <ligand>
        <name>NADP(+)</name>
        <dbReference type="ChEBI" id="CHEBI:58349"/>
    </ligand>
</feature>
<feature type="binding site" evidence="1">
    <location>
        <position position="213"/>
    </location>
    <ligand>
        <name>NADP(+)</name>
        <dbReference type="ChEBI" id="CHEBI:58349"/>
    </ligand>
</feature>
<feature type="binding site" evidence="1">
    <location>
        <position position="215"/>
    </location>
    <ligand>
        <name>shikimate</name>
        <dbReference type="ChEBI" id="CHEBI:36208"/>
    </ligand>
</feature>
<feature type="binding site" evidence="1">
    <location>
        <position position="237"/>
    </location>
    <ligand>
        <name>NADP(+)</name>
        <dbReference type="ChEBI" id="CHEBI:58349"/>
    </ligand>
</feature>
<name>AROE_SHIBS</name>
<organism>
    <name type="scientific">Shigella boydii serotype 4 (strain Sb227)</name>
    <dbReference type="NCBI Taxonomy" id="300268"/>
    <lineage>
        <taxon>Bacteria</taxon>
        <taxon>Pseudomonadati</taxon>
        <taxon>Pseudomonadota</taxon>
        <taxon>Gammaproteobacteria</taxon>
        <taxon>Enterobacterales</taxon>
        <taxon>Enterobacteriaceae</taxon>
        <taxon>Shigella</taxon>
    </lineage>
</organism>